<proteinExistence type="inferred from homology"/>
<name>XGPT_GLUOX</name>
<reference key="1">
    <citation type="journal article" date="2005" name="Nat. Biotechnol.">
        <title>Complete genome sequence of the acetic acid bacterium Gluconobacter oxydans.</title>
        <authorList>
            <person name="Prust C."/>
            <person name="Hoffmeister M."/>
            <person name="Liesegang H."/>
            <person name="Wiezer A."/>
            <person name="Fricke W.F."/>
            <person name="Ehrenreich A."/>
            <person name="Gottschalk G."/>
            <person name="Deppenmeier U."/>
        </authorList>
    </citation>
    <scope>NUCLEOTIDE SEQUENCE [LARGE SCALE GENOMIC DNA]</scope>
    <source>
        <strain>621H</strain>
    </source>
</reference>
<evidence type="ECO:0000255" key="1">
    <source>
        <dbReference type="HAMAP-Rule" id="MF_01903"/>
    </source>
</evidence>
<feature type="chain" id="PRO_0000139669" description="Xanthine-guanine phosphoribosyltransferase">
    <location>
        <begin position="1"/>
        <end position="168"/>
    </location>
</feature>
<feature type="binding site" evidence="1">
    <location>
        <begin position="46"/>
        <end position="47"/>
    </location>
    <ligand>
        <name>5-phospho-alpha-D-ribose 1-diphosphate</name>
        <dbReference type="ChEBI" id="CHEBI:58017"/>
    </ligand>
</feature>
<feature type="binding site" evidence="1">
    <location>
        <begin position="101"/>
        <end position="109"/>
    </location>
    <ligand>
        <name>5-phospho-alpha-D-ribose 1-diphosphate</name>
        <dbReference type="ChEBI" id="CHEBI:58017"/>
    </ligand>
</feature>
<feature type="binding site" evidence="1">
    <location>
        <position position="102"/>
    </location>
    <ligand>
        <name>Mg(2+)</name>
        <dbReference type="ChEBI" id="CHEBI:18420"/>
    </ligand>
</feature>
<feature type="binding site" evidence="1">
    <location>
        <begin position="105"/>
        <end position="109"/>
    </location>
    <ligand>
        <name>GMP</name>
        <dbReference type="ChEBI" id="CHEBI:58115"/>
    </ligand>
</feature>
<feature type="binding site" evidence="1">
    <location>
        <position position="105"/>
    </location>
    <ligand>
        <name>guanine</name>
        <dbReference type="ChEBI" id="CHEBI:16235"/>
    </ligand>
</feature>
<feature type="binding site" evidence="1">
    <location>
        <position position="105"/>
    </location>
    <ligand>
        <name>xanthine</name>
        <dbReference type="ChEBI" id="CHEBI:17712"/>
    </ligand>
</feature>
<feature type="binding site" evidence="1">
    <location>
        <begin position="147"/>
        <end position="148"/>
    </location>
    <ligand>
        <name>GMP</name>
        <dbReference type="ChEBI" id="CHEBI:58115"/>
    </ligand>
</feature>
<feature type="binding site" evidence="1">
    <location>
        <position position="148"/>
    </location>
    <ligand>
        <name>xanthine</name>
        <dbReference type="ChEBI" id="CHEBI:17712"/>
    </ligand>
</feature>
<sequence>MTANQTPQTVHYATVTWDQLHRDARLLAATLMQKHGPFRGIVAITRGGLIPAAILGREMGCRLIESVSVISYAGEEGTQHEPKVVKPPVAAGDGEGFLIVDDLVDSGVTARIVRELLPKAVFACLYAKPEGKPFTDHYVTEVAQDTWVLFPWDTAPLFVPPLVRSEGE</sequence>
<protein>
    <recommendedName>
        <fullName evidence="1">Xanthine-guanine phosphoribosyltransferase</fullName>
        <shortName evidence="1">XGPRT</shortName>
        <ecNumber evidence="1">2.4.2.-</ecNumber>
        <ecNumber evidence="1">2.4.2.22</ecNumber>
    </recommendedName>
    <alternativeName>
        <fullName evidence="1">Xanthine phosphoribosyltransferase</fullName>
    </alternativeName>
</protein>
<organism>
    <name type="scientific">Gluconobacter oxydans (strain 621H)</name>
    <name type="common">Gluconobacter suboxydans</name>
    <dbReference type="NCBI Taxonomy" id="290633"/>
    <lineage>
        <taxon>Bacteria</taxon>
        <taxon>Pseudomonadati</taxon>
        <taxon>Pseudomonadota</taxon>
        <taxon>Alphaproteobacteria</taxon>
        <taxon>Acetobacterales</taxon>
        <taxon>Acetobacteraceae</taxon>
        <taxon>Gluconobacter</taxon>
    </lineage>
</organism>
<keyword id="KW-0997">Cell inner membrane</keyword>
<keyword id="KW-1003">Cell membrane</keyword>
<keyword id="KW-0328">Glycosyltransferase</keyword>
<keyword id="KW-0460">Magnesium</keyword>
<keyword id="KW-0472">Membrane</keyword>
<keyword id="KW-0479">Metal-binding</keyword>
<keyword id="KW-0660">Purine salvage</keyword>
<keyword id="KW-1185">Reference proteome</keyword>
<keyword id="KW-0808">Transferase</keyword>
<comment type="function">
    <text evidence="1">Purine salvage pathway enzyme that catalyzes the transfer of the ribosyl-5-phosphate group from 5-phospho-alpha-D-ribose 1-diphosphate (PRPP) to the N9 position of the 6-oxopurines guanine and xanthine to form the corresponding ribonucleotides GMP (guanosine 5'-monophosphate) and XMP (xanthosine 5'-monophosphate), with the release of PPi. To a lesser extent, also acts on hypoxanthine.</text>
</comment>
<comment type="catalytic activity">
    <reaction evidence="1">
        <text>GMP + diphosphate = guanine + 5-phospho-alpha-D-ribose 1-diphosphate</text>
        <dbReference type="Rhea" id="RHEA:25424"/>
        <dbReference type="ChEBI" id="CHEBI:16235"/>
        <dbReference type="ChEBI" id="CHEBI:33019"/>
        <dbReference type="ChEBI" id="CHEBI:58017"/>
        <dbReference type="ChEBI" id="CHEBI:58115"/>
    </reaction>
    <physiologicalReaction direction="right-to-left" evidence="1">
        <dbReference type="Rhea" id="RHEA:25426"/>
    </physiologicalReaction>
</comment>
<comment type="catalytic activity">
    <reaction evidence="1">
        <text>XMP + diphosphate = xanthine + 5-phospho-alpha-D-ribose 1-diphosphate</text>
        <dbReference type="Rhea" id="RHEA:10800"/>
        <dbReference type="ChEBI" id="CHEBI:17712"/>
        <dbReference type="ChEBI" id="CHEBI:33019"/>
        <dbReference type="ChEBI" id="CHEBI:57464"/>
        <dbReference type="ChEBI" id="CHEBI:58017"/>
        <dbReference type="EC" id="2.4.2.22"/>
    </reaction>
    <physiologicalReaction direction="right-to-left" evidence="1">
        <dbReference type="Rhea" id="RHEA:10802"/>
    </physiologicalReaction>
</comment>
<comment type="catalytic activity">
    <reaction evidence="1">
        <text>IMP + diphosphate = hypoxanthine + 5-phospho-alpha-D-ribose 1-diphosphate</text>
        <dbReference type="Rhea" id="RHEA:17973"/>
        <dbReference type="ChEBI" id="CHEBI:17368"/>
        <dbReference type="ChEBI" id="CHEBI:33019"/>
        <dbReference type="ChEBI" id="CHEBI:58017"/>
        <dbReference type="ChEBI" id="CHEBI:58053"/>
    </reaction>
    <physiologicalReaction direction="right-to-left" evidence="1">
        <dbReference type="Rhea" id="RHEA:17975"/>
    </physiologicalReaction>
</comment>
<comment type="cofactor">
    <cofactor evidence="1">
        <name>Mg(2+)</name>
        <dbReference type="ChEBI" id="CHEBI:18420"/>
    </cofactor>
</comment>
<comment type="pathway">
    <text evidence="1">Purine metabolism; GMP biosynthesis via salvage pathway; GMP from guanine: step 1/1.</text>
</comment>
<comment type="pathway">
    <text evidence="1">Purine metabolism; XMP biosynthesis via salvage pathway; XMP from xanthine: step 1/1.</text>
</comment>
<comment type="subunit">
    <text evidence="1">Homotetramer.</text>
</comment>
<comment type="subcellular location">
    <subcellularLocation>
        <location evidence="1">Cell inner membrane</location>
        <topology evidence="1">Peripheral membrane protein</topology>
    </subcellularLocation>
</comment>
<comment type="similarity">
    <text evidence="1">Belongs to the purine/pyrimidine phosphoribosyltransferase family. XGPT subfamily.</text>
</comment>
<dbReference type="EC" id="2.4.2.-" evidence="1"/>
<dbReference type="EC" id="2.4.2.22" evidence="1"/>
<dbReference type="EMBL" id="CP000009">
    <property type="protein sequence ID" value="AAW59965.1"/>
    <property type="molecule type" value="Genomic_DNA"/>
</dbReference>
<dbReference type="RefSeq" id="WP_011251768.1">
    <property type="nucleotide sequence ID" value="NZ_LT900338.1"/>
</dbReference>
<dbReference type="SMR" id="Q5FUI1"/>
<dbReference type="STRING" id="290633.GOX0174"/>
<dbReference type="GeneID" id="56904445"/>
<dbReference type="KEGG" id="gox:GOX0174"/>
<dbReference type="eggNOG" id="COG2236">
    <property type="taxonomic scope" value="Bacteria"/>
</dbReference>
<dbReference type="HOGENOM" id="CLU_080904_3_0_5"/>
<dbReference type="UniPathway" id="UPA00602">
    <property type="reaction ID" value="UER00658"/>
</dbReference>
<dbReference type="UniPathway" id="UPA00909">
    <property type="reaction ID" value="UER00887"/>
</dbReference>
<dbReference type="Proteomes" id="UP000006375">
    <property type="component" value="Chromosome"/>
</dbReference>
<dbReference type="GO" id="GO:0005829">
    <property type="term" value="C:cytosol"/>
    <property type="evidence" value="ECO:0007669"/>
    <property type="project" value="TreeGrafter"/>
</dbReference>
<dbReference type="GO" id="GO:0005886">
    <property type="term" value="C:plasma membrane"/>
    <property type="evidence" value="ECO:0007669"/>
    <property type="project" value="UniProtKB-SubCell"/>
</dbReference>
<dbReference type="GO" id="GO:0052657">
    <property type="term" value="F:guanine phosphoribosyltransferase activity"/>
    <property type="evidence" value="ECO:0007669"/>
    <property type="project" value="RHEA"/>
</dbReference>
<dbReference type="GO" id="GO:0004422">
    <property type="term" value="F:hypoxanthine phosphoribosyltransferase activity"/>
    <property type="evidence" value="ECO:0007669"/>
    <property type="project" value="TreeGrafter"/>
</dbReference>
<dbReference type="GO" id="GO:0000287">
    <property type="term" value="F:magnesium ion binding"/>
    <property type="evidence" value="ECO:0007669"/>
    <property type="project" value="UniProtKB-UniRule"/>
</dbReference>
<dbReference type="GO" id="GO:0000310">
    <property type="term" value="F:xanthine phosphoribosyltransferase activity"/>
    <property type="evidence" value="ECO:0007669"/>
    <property type="project" value="UniProtKB-UniRule"/>
</dbReference>
<dbReference type="GO" id="GO:0032263">
    <property type="term" value="P:GMP salvage"/>
    <property type="evidence" value="ECO:0007669"/>
    <property type="project" value="UniProtKB-UniRule"/>
</dbReference>
<dbReference type="GO" id="GO:0032264">
    <property type="term" value="P:IMP salvage"/>
    <property type="evidence" value="ECO:0007669"/>
    <property type="project" value="TreeGrafter"/>
</dbReference>
<dbReference type="GO" id="GO:0006166">
    <property type="term" value="P:purine ribonucleoside salvage"/>
    <property type="evidence" value="ECO:0007669"/>
    <property type="project" value="UniProtKB-KW"/>
</dbReference>
<dbReference type="GO" id="GO:0032265">
    <property type="term" value="P:XMP salvage"/>
    <property type="evidence" value="ECO:0007669"/>
    <property type="project" value="UniProtKB-UniRule"/>
</dbReference>
<dbReference type="CDD" id="cd06223">
    <property type="entry name" value="PRTases_typeI"/>
    <property type="match status" value="1"/>
</dbReference>
<dbReference type="Gene3D" id="3.40.50.2020">
    <property type="match status" value="1"/>
</dbReference>
<dbReference type="HAMAP" id="MF_01903">
    <property type="entry name" value="XGPRT"/>
    <property type="match status" value="1"/>
</dbReference>
<dbReference type="InterPro" id="IPR000836">
    <property type="entry name" value="PRibTrfase_dom"/>
</dbReference>
<dbReference type="InterPro" id="IPR029057">
    <property type="entry name" value="PRTase-like"/>
</dbReference>
<dbReference type="InterPro" id="IPR023747">
    <property type="entry name" value="Xanthine_Guanine_PRibTrfase"/>
</dbReference>
<dbReference type="NCBIfam" id="NF006613">
    <property type="entry name" value="PRK09177.1"/>
    <property type="match status" value="1"/>
</dbReference>
<dbReference type="PANTHER" id="PTHR39563">
    <property type="entry name" value="XANTHINE PHOSPHORIBOSYLTRANSFERASE"/>
    <property type="match status" value="1"/>
</dbReference>
<dbReference type="PANTHER" id="PTHR39563:SF1">
    <property type="entry name" value="XANTHINE-GUANINE PHOSPHORIBOSYLTRANSFERASE"/>
    <property type="match status" value="1"/>
</dbReference>
<dbReference type="Pfam" id="PF00156">
    <property type="entry name" value="Pribosyltran"/>
    <property type="match status" value="1"/>
</dbReference>
<dbReference type="SUPFAM" id="SSF53271">
    <property type="entry name" value="PRTase-like"/>
    <property type="match status" value="1"/>
</dbReference>
<dbReference type="PROSITE" id="PS00103">
    <property type="entry name" value="PUR_PYR_PR_TRANSFER"/>
    <property type="match status" value="1"/>
</dbReference>
<gene>
    <name evidence="1" type="primary">gpt</name>
    <name type="ordered locus">GOX0174</name>
</gene>
<accession>Q5FUI1</accession>